<feature type="signal peptide" evidence="1">
    <location>
        <begin position="1"/>
        <end position="22"/>
    </location>
</feature>
<feature type="chain" id="PRO_0000031659" description="Granulysin">
    <location>
        <begin position="23"/>
        <end position="145"/>
    </location>
</feature>
<feature type="domain" description="Saposin B-type" evidence="2">
    <location>
        <begin position="62"/>
        <end position="142"/>
    </location>
</feature>
<feature type="disulfide bond">
    <location>
        <begin position="69"/>
        <end position="132"/>
    </location>
</feature>
<feature type="disulfide bond">
    <location>
        <begin position="96"/>
        <end position="107"/>
    </location>
</feature>
<feature type="splice variant" id="VSP_006016" description="In isoform Short." evidence="6">
    <original>MATWALLLLAAMLLGNP</original>
    <variation>ME</variation>
    <location>
        <begin position="1"/>
        <end position="17"/>
    </location>
</feature>
<feature type="sequence variant" id="VAR_027868" description="In dbSNP:rs11127." evidence="4 5">
    <original>T</original>
    <variation>I</variation>
    <location>
        <position position="119"/>
    </location>
</feature>
<feature type="sequence conflict" description="In Ref. 1; CAA28715." evidence="7" ref="1">
    <original>L</original>
    <variation>P</variation>
    <location>
        <position position="31"/>
    </location>
</feature>
<feature type="sequence conflict" description="In Ref. 1; CAA28715." evidence="7" ref="1">
    <original>E</original>
    <variation>G</variation>
    <location>
        <position position="39"/>
    </location>
</feature>
<feature type="sequence conflict" description="In Ref. 1; CAA28715." evidence="7" ref="1">
    <original>LA</original>
    <variation>G</variation>
    <location>
        <begin position="46"/>
        <end position="47"/>
    </location>
</feature>
<feature type="helix" evidence="8">
    <location>
        <begin position="64"/>
        <end position="79"/>
    </location>
</feature>
<feature type="helix" evidence="8">
    <location>
        <begin position="85"/>
        <end position="94"/>
    </location>
</feature>
<feature type="helix" evidence="8">
    <location>
        <begin position="95"/>
        <end position="97"/>
    </location>
</feature>
<feature type="helix" evidence="8">
    <location>
        <begin position="101"/>
        <end position="123"/>
    </location>
</feature>
<feature type="helix" evidence="8">
    <location>
        <begin position="128"/>
        <end position="132"/>
    </location>
</feature>
<feature type="helix" evidence="8">
    <location>
        <begin position="133"/>
        <end position="135"/>
    </location>
</feature>
<sequence>MATWALLLLAAMLLGNPGLVFSRLSPEYYDLARAHLRDEEKSCPCLAQEGPQGDLLTKTQELGRDYRTCLTIVQKLKKMVDKPTQRSVSNAATRVCRTGRSRWRDVCRNFMRRYQSRVTQGLVAGETAQQICEDLRLCIPSTGPL</sequence>
<comment type="function">
    <text>Antimicrobial protein that kills intracellular pathogens. Active against a broad range of microbes, including Gram-positive and Gram-negative bacteria, fungi, and parasites. Kills Mycobacterium tuberculosis.</text>
</comment>
<comment type="interaction">
    <interactant intactId="EBI-17844792">
        <id>P22749</id>
    </interactant>
    <interactant intactId="EBI-78035">
        <id>Q07817</id>
        <label>BCL2L1</label>
    </interactant>
    <organismsDiffer>false</organismsDiffer>
    <experiments>3</experiments>
</comment>
<comment type="interaction">
    <interactant intactId="EBI-17844792">
        <id>P22749</id>
    </interactant>
    <interactant intactId="EBI-12831318">
        <id>Q96Q80</id>
        <label>DERL3</label>
    </interactant>
    <organismsDiffer>false</organismsDiffer>
    <experiments>3</experiments>
</comment>
<comment type="subcellular location">
    <subcellularLocation>
        <location>Secreted</location>
    </subcellularLocation>
    <text>Located in the cytotoxic granules of T-cells, which are released upon antigen stimulation.</text>
</comment>
<comment type="alternative products">
    <event type="alternative splicing"/>
    <isoform>
        <id>P22749-1</id>
        <name>Long</name>
        <sequence type="displayed"/>
    </isoform>
    <isoform>
        <id>P22749-2</id>
        <name>Short</name>
        <sequence type="described" ref="VSP_006016"/>
    </isoform>
</comment>
<comment type="tissue specificity">
    <text>Expressed in natural killer and T-cells.</text>
</comment>
<comment type="induction">
    <text>By T-cell growth factor and IL2/interleukin-2.</text>
</comment>
<comment type="PTM">
    <text evidence="3">A 9 kDa form is produced by proteolytic processing of a 15 kDa protein.</text>
</comment>
<proteinExistence type="evidence at protein level"/>
<dbReference type="EMBL" id="X05044">
    <property type="protein sequence ID" value="CAA28715.1"/>
    <property type="molecule type" value="mRNA"/>
</dbReference>
<dbReference type="EMBL" id="X54101">
    <property type="protein sequence ID" value="CAA38035.1"/>
    <property type="molecule type" value="mRNA"/>
</dbReference>
<dbReference type="EMBL" id="M85276">
    <property type="protein sequence ID" value="AAA59935.1"/>
    <property type="molecule type" value="Genomic_DNA"/>
</dbReference>
<dbReference type="EMBL" id="CR541859">
    <property type="protein sequence ID" value="CAG46657.1"/>
    <property type="molecule type" value="mRNA"/>
</dbReference>
<dbReference type="EMBL" id="BC023576">
    <property type="protein sequence ID" value="AAH23576.1"/>
    <property type="molecule type" value="mRNA"/>
</dbReference>
<dbReference type="CCDS" id="CCDS1984.1">
    <molecule id="P22749-1"/>
</dbReference>
<dbReference type="CCDS" id="CCDS46354.1">
    <molecule id="P22749-2"/>
</dbReference>
<dbReference type="PIR" id="A27562">
    <property type="entry name" value="A27562"/>
</dbReference>
<dbReference type="PIR" id="I54504">
    <property type="entry name" value="I54504"/>
</dbReference>
<dbReference type="RefSeq" id="NP_001289687.1">
    <property type="nucleotide sequence ID" value="NM_001302758.1"/>
</dbReference>
<dbReference type="RefSeq" id="NP_006424.2">
    <molecule id="P22749-1"/>
    <property type="nucleotide sequence ID" value="NM_006433.4"/>
</dbReference>
<dbReference type="RefSeq" id="NP_036615.2">
    <molecule id="P22749-2"/>
    <property type="nucleotide sequence ID" value="NM_012483.4"/>
</dbReference>
<dbReference type="PDB" id="1L9L">
    <property type="method" value="X-ray"/>
    <property type="resolution" value="0.92 A"/>
    <property type="chains" value="A=63-136"/>
</dbReference>
<dbReference type="PDBsum" id="1L9L"/>
<dbReference type="SMR" id="P22749"/>
<dbReference type="BioGRID" id="115829">
    <property type="interactions" value="40"/>
</dbReference>
<dbReference type="FunCoup" id="P22749">
    <property type="interactions" value="3"/>
</dbReference>
<dbReference type="IntAct" id="P22749">
    <property type="interactions" value="37"/>
</dbReference>
<dbReference type="STRING" id="9606.ENSP00000436423"/>
<dbReference type="DrugBank" id="DB03434">
    <property type="generic name" value="3-(N-morpholino)propanesulfonic acid"/>
</dbReference>
<dbReference type="TCDB" id="1.C.35.3.2">
    <property type="family name" value="the amoebapore (amoebapore) family"/>
</dbReference>
<dbReference type="iPTMnet" id="P22749"/>
<dbReference type="PhosphoSitePlus" id="P22749"/>
<dbReference type="BioMuta" id="GNLY"/>
<dbReference type="DMDM" id="116242500"/>
<dbReference type="MassIVE" id="P22749"/>
<dbReference type="PaxDb" id="9606-ENSP00000263863"/>
<dbReference type="PeptideAtlas" id="P22749"/>
<dbReference type="ProteomicsDB" id="54035">
    <molecule id="P22749-1"/>
</dbReference>
<dbReference type="ProteomicsDB" id="54036">
    <molecule id="P22749-2"/>
</dbReference>
<dbReference type="Antibodypedia" id="31957">
    <property type="antibodies" value="257 antibodies from 28 providers"/>
</dbReference>
<dbReference type="DNASU" id="10578"/>
<dbReference type="Ensembl" id="ENST00000263863.9">
    <molecule id="P22749-1"/>
    <property type="protein sequence ID" value="ENSP00000263863.5"/>
    <property type="gene ID" value="ENSG00000115523.17"/>
</dbReference>
<dbReference type="Ensembl" id="ENST00000409696.7">
    <molecule id="P22749-2"/>
    <property type="protein sequence ID" value="ENSP00000387116.3"/>
    <property type="gene ID" value="ENSG00000115523.17"/>
</dbReference>
<dbReference type="GeneID" id="10578"/>
<dbReference type="KEGG" id="hsa:10578"/>
<dbReference type="MANE-Select" id="ENST00000263863.9">
    <property type="protein sequence ID" value="ENSP00000263863.5"/>
    <property type="RefSeq nucleotide sequence ID" value="NM_006433.5"/>
    <property type="RefSeq protein sequence ID" value="NP_006424.2"/>
</dbReference>
<dbReference type="UCSC" id="uc002sql.5">
    <molecule id="P22749-1"/>
    <property type="organism name" value="human"/>
</dbReference>
<dbReference type="AGR" id="HGNC:4414"/>
<dbReference type="CTD" id="10578"/>
<dbReference type="DisGeNET" id="10578"/>
<dbReference type="GeneCards" id="GNLY"/>
<dbReference type="HGNC" id="HGNC:4414">
    <property type="gene designation" value="GNLY"/>
</dbReference>
<dbReference type="HPA" id="ENSG00000115523">
    <property type="expression patterns" value="Tissue enhanced (bone marrow, endometrium, lymphoid tissue)"/>
</dbReference>
<dbReference type="MIM" id="188855">
    <property type="type" value="gene"/>
</dbReference>
<dbReference type="neXtProt" id="NX_P22749"/>
<dbReference type="OpenTargets" id="ENSG00000115523"/>
<dbReference type="PharmGKB" id="PA28793"/>
<dbReference type="VEuPathDB" id="HostDB:ENSG00000115523"/>
<dbReference type="eggNOG" id="ENOG502ST3Z">
    <property type="taxonomic scope" value="Eukaryota"/>
</dbReference>
<dbReference type="GeneTree" id="ENSGT00390000002975"/>
<dbReference type="InParanoid" id="P22749"/>
<dbReference type="OMA" id="NGDELCQ"/>
<dbReference type="OrthoDB" id="69496at2759"/>
<dbReference type="PAN-GO" id="P22749">
    <property type="GO annotations" value="4 GO annotations based on evolutionary models"/>
</dbReference>
<dbReference type="PhylomeDB" id="P22749"/>
<dbReference type="TreeFam" id="TF342210"/>
<dbReference type="PathwayCommons" id="P22749"/>
<dbReference type="Reactome" id="R-HSA-6803157">
    <property type="pathway name" value="Antimicrobial peptides"/>
</dbReference>
<dbReference type="SignaLink" id="P22749"/>
<dbReference type="BioGRID-ORCS" id="10578">
    <property type="hits" value="13 hits in 1150 CRISPR screens"/>
</dbReference>
<dbReference type="ChiTaRS" id="GNLY">
    <property type="organism name" value="human"/>
</dbReference>
<dbReference type="EvolutionaryTrace" id="P22749"/>
<dbReference type="GeneWiki" id="GNLY"/>
<dbReference type="GenomeRNAi" id="10578"/>
<dbReference type="Pharos" id="P22749">
    <property type="development level" value="Tbio"/>
</dbReference>
<dbReference type="PRO" id="PR:P22749"/>
<dbReference type="Proteomes" id="UP000005640">
    <property type="component" value="Chromosome 2"/>
</dbReference>
<dbReference type="RNAct" id="P22749">
    <property type="molecule type" value="protein"/>
</dbReference>
<dbReference type="Bgee" id="ENSG00000115523">
    <property type="expression patterns" value="Expressed in granulocyte and 113 other cell types or tissues"/>
</dbReference>
<dbReference type="ExpressionAtlas" id="P22749">
    <property type="expression patterns" value="baseline and differential"/>
</dbReference>
<dbReference type="GO" id="GO:0005576">
    <property type="term" value="C:extracellular region"/>
    <property type="evidence" value="ECO:0000304"/>
    <property type="project" value="Reactome"/>
</dbReference>
<dbReference type="GO" id="GO:0005615">
    <property type="term" value="C:extracellular space"/>
    <property type="evidence" value="ECO:0000304"/>
    <property type="project" value="ProtInc"/>
</dbReference>
<dbReference type="GO" id="GO:0097013">
    <property type="term" value="C:phagocytic vesicle lumen"/>
    <property type="evidence" value="ECO:0000304"/>
    <property type="project" value="Reactome"/>
</dbReference>
<dbReference type="GO" id="GO:0061844">
    <property type="term" value="P:antimicrobial humoral immune response mediated by antimicrobial peptide"/>
    <property type="evidence" value="ECO:0000314"/>
    <property type="project" value="UniProtKB"/>
</dbReference>
<dbReference type="GO" id="GO:0006968">
    <property type="term" value="P:cellular defense response"/>
    <property type="evidence" value="ECO:0000314"/>
    <property type="project" value="UniProtKB"/>
</dbReference>
<dbReference type="GO" id="GO:0042742">
    <property type="term" value="P:defense response to bacterium"/>
    <property type="evidence" value="ECO:0000314"/>
    <property type="project" value="UniProtKB"/>
</dbReference>
<dbReference type="GO" id="GO:0050832">
    <property type="term" value="P:defense response to fungus"/>
    <property type="evidence" value="ECO:0007669"/>
    <property type="project" value="UniProtKB-KW"/>
</dbReference>
<dbReference type="GO" id="GO:0031640">
    <property type="term" value="P:killing of cells of another organism"/>
    <property type="evidence" value="ECO:0000314"/>
    <property type="project" value="UniProtKB"/>
</dbReference>
<dbReference type="Gene3D" id="1.10.225.10">
    <property type="entry name" value="Saposin-like"/>
    <property type="match status" value="1"/>
</dbReference>
<dbReference type="InterPro" id="IPR038847">
    <property type="entry name" value="Granulysin-like"/>
</dbReference>
<dbReference type="InterPro" id="IPR008138">
    <property type="entry name" value="SapB_2"/>
</dbReference>
<dbReference type="InterPro" id="IPR011001">
    <property type="entry name" value="Saposin-like"/>
</dbReference>
<dbReference type="InterPro" id="IPR008139">
    <property type="entry name" value="SaposinB_dom"/>
</dbReference>
<dbReference type="PANTHER" id="PTHR15541:SF2">
    <property type="entry name" value="GRANULYSIN"/>
    <property type="match status" value="1"/>
</dbReference>
<dbReference type="PANTHER" id="PTHR15541">
    <property type="entry name" value="GRANULYSIN RELATED"/>
    <property type="match status" value="1"/>
</dbReference>
<dbReference type="Pfam" id="PF03489">
    <property type="entry name" value="SapB_2"/>
    <property type="match status" value="1"/>
</dbReference>
<dbReference type="SMART" id="SM00741">
    <property type="entry name" value="SapB"/>
    <property type="match status" value="1"/>
</dbReference>
<dbReference type="SUPFAM" id="SSF47862">
    <property type="entry name" value="Saposin"/>
    <property type="match status" value="1"/>
</dbReference>
<dbReference type="PROSITE" id="PS50015">
    <property type="entry name" value="SAP_B"/>
    <property type="match status" value="1"/>
</dbReference>
<accession>P22749</accession>
<accession>P09325</accession>
<accession>Q6GU08</accession>
<organism>
    <name type="scientific">Homo sapiens</name>
    <name type="common">Human</name>
    <dbReference type="NCBI Taxonomy" id="9606"/>
    <lineage>
        <taxon>Eukaryota</taxon>
        <taxon>Metazoa</taxon>
        <taxon>Chordata</taxon>
        <taxon>Craniata</taxon>
        <taxon>Vertebrata</taxon>
        <taxon>Euteleostomi</taxon>
        <taxon>Mammalia</taxon>
        <taxon>Eutheria</taxon>
        <taxon>Euarchontoglires</taxon>
        <taxon>Primates</taxon>
        <taxon>Haplorrhini</taxon>
        <taxon>Catarrhini</taxon>
        <taxon>Hominidae</taxon>
        <taxon>Homo</taxon>
    </lineage>
</organism>
<keyword id="KW-0002">3D-structure</keyword>
<keyword id="KW-0025">Alternative splicing</keyword>
<keyword id="KW-0044">Antibiotic</keyword>
<keyword id="KW-0929">Antimicrobial</keyword>
<keyword id="KW-1015">Disulfide bond</keyword>
<keyword id="KW-0295">Fungicide</keyword>
<keyword id="KW-1267">Proteomics identification</keyword>
<keyword id="KW-1185">Reference proteome</keyword>
<keyword id="KW-0964">Secreted</keyword>
<keyword id="KW-0732">Signal</keyword>
<protein>
    <recommendedName>
        <fullName>Granulysin</fullName>
    </recommendedName>
    <alternativeName>
        <fullName>Lymphokine LAG-2</fullName>
    </alternativeName>
    <alternativeName>
        <fullName>Protein NKG5</fullName>
    </alternativeName>
    <alternativeName>
        <fullName>T-cell activation protein 519</fullName>
    </alternativeName>
</protein>
<evidence type="ECO:0000255" key="1"/>
<evidence type="ECO:0000255" key="2">
    <source>
        <dbReference type="PROSITE-ProRule" id="PRU00415"/>
    </source>
</evidence>
<evidence type="ECO:0000269" key="3">
    <source>
    </source>
</evidence>
<evidence type="ECO:0000269" key="4">
    <source>
    </source>
</evidence>
<evidence type="ECO:0000269" key="5">
    <source>
    </source>
</evidence>
<evidence type="ECO:0000303" key="6">
    <source>
    </source>
</evidence>
<evidence type="ECO:0000305" key="7"/>
<evidence type="ECO:0007829" key="8">
    <source>
        <dbReference type="PDB" id="1L9L"/>
    </source>
</evidence>
<reference key="1">
    <citation type="journal article" date="1987" name="J. Exp. Med.">
        <title>The isolation and sequence of a novel gene from a human functional T cell line.</title>
        <authorList>
            <person name="Jongstra J."/>
            <person name="Schall T.J."/>
            <person name="Dyer B.J."/>
            <person name="Clayberger C."/>
            <person name="Jorgensen J."/>
            <person name="Davis M.M."/>
            <person name="Krensky A.M."/>
        </authorList>
    </citation>
    <scope>NUCLEOTIDE SEQUENCE [MRNA] (ISOFORM SHORT)</scope>
    <scope>VARIANT ILE-119</scope>
</reference>
<reference key="2">
    <citation type="journal article" date="1990" name="J. Exp. Med.">
        <title>A cDNA clone expressed in natural killer and T cells that likely encodes a secreted protein.</title>
        <authorList>
            <person name="Yabe T."/>
            <person name="McSherry C."/>
            <person name="Bach F.H."/>
            <person name="Houchins J.P."/>
        </authorList>
    </citation>
    <scope>NUCLEOTIDE SEQUENCE [MRNA] (ISOFORM LONG)</scope>
</reference>
<reference key="3">
    <citation type="journal article" date="1993" name="Immunogenetics">
        <title>Genomic structure of NKG5, a human NK and T cell-specific activation gene.</title>
        <authorList>
            <person name="Houchins J.P."/>
            <person name="Kricek F."/>
            <person name="Chujor C.S."/>
            <person name="Heise C.P."/>
            <person name="Yabe T."/>
            <person name="McSherry C."/>
            <person name="Bach F.H."/>
        </authorList>
    </citation>
    <scope>NUCLEOTIDE SEQUENCE [GENOMIC DNA]</scope>
    <scope>VARIANT ILE-119</scope>
    <source>
        <tissue>Placenta</tissue>
    </source>
</reference>
<reference key="4">
    <citation type="submission" date="2004-06" db="EMBL/GenBank/DDBJ databases">
        <title>Cloning of human full open reading frames in Gateway(TM) system entry vector (pDONR201).</title>
        <authorList>
            <person name="Halleck A."/>
            <person name="Ebert L."/>
            <person name="Mkoundinya M."/>
            <person name="Schick M."/>
            <person name="Eisenstein S."/>
            <person name="Neubert P."/>
            <person name="Kstrang K."/>
            <person name="Schatten R."/>
            <person name="Shen B."/>
            <person name="Henze S."/>
            <person name="Mar W."/>
            <person name="Korn B."/>
            <person name="Zuo D."/>
            <person name="Hu Y."/>
            <person name="LaBaer J."/>
        </authorList>
    </citation>
    <scope>NUCLEOTIDE SEQUENCE [LARGE SCALE MRNA]</scope>
</reference>
<reference key="5">
    <citation type="journal article" date="2004" name="Genome Res.">
        <title>The status, quality, and expansion of the NIH full-length cDNA project: the Mammalian Gene Collection (MGC).</title>
        <authorList>
            <consortium name="The MGC Project Team"/>
        </authorList>
    </citation>
    <scope>NUCLEOTIDE SEQUENCE [LARGE SCALE MRNA]</scope>
    <source>
        <tissue>B-cell</tissue>
    </source>
</reference>
<reference key="6">
    <citation type="journal article" date="2000" name="Biochem. Pharmacol.">
        <title>Granulysin: a novel antimicrobial peptide of cytolytic T lymphocytes and natural killer cells.</title>
        <authorList>
            <person name="Krensky A.M."/>
        </authorList>
    </citation>
    <scope>REVIEW</scope>
</reference>
<reference key="7">
    <citation type="journal article" date="1998" name="Science">
        <title>An antimicrobial activity of cytolytic T cells mediated by granulysin.</title>
        <authorList>
            <person name="Stenger S."/>
            <person name="Hanson D.A."/>
            <person name="Teitelbaum R."/>
            <person name="Dewan P."/>
            <person name="Niazi K.R."/>
            <person name="Froelich C.J."/>
            <person name="Ganz T."/>
            <person name="Thoma-Uszynski S."/>
            <person name="Melian A."/>
            <person name="Bogdan C."/>
            <person name="Porcelli S.A."/>
            <person name="Bloom B.R."/>
            <person name="Krensky A.M."/>
            <person name="Modlin R.L."/>
        </authorList>
    </citation>
    <scope>CHARACTERIZATION</scope>
</reference>
<reference key="8">
    <citation type="journal article" date="1999" name="Mol. Immunol.">
        <title>Biosynthesis of granulysin, a novel cytolytic molecule.</title>
        <authorList>
            <person name="Hanson D.A."/>
            <person name="Kaspar A.A."/>
            <person name="Poulain F.R."/>
            <person name="Krensky A.M."/>
        </authorList>
    </citation>
    <scope>PROTEOLYTIC PROCESSING</scope>
</reference>
<reference key="9">
    <citation type="journal article" date="2003" name="J. Mol. Biol.">
        <title>Granulysin crystal structure and a structure-derived lytic mechanism.</title>
        <authorList>
            <person name="Anderson D.H."/>
            <person name="Sawaya M.R."/>
            <person name="Cascio D."/>
            <person name="Ernst W."/>
            <person name="Modlin R."/>
            <person name="Krensky A."/>
            <person name="Eisenberg D."/>
        </authorList>
    </citation>
    <scope>X-RAY CRYSTALLOGRAPHY (0.92 ANGSTROMS) OF 63-136</scope>
</reference>
<name>GNLY_HUMAN</name>
<gene>
    <name type="primary">GNLY</name>
    <name type="synonym">LAG2</name>
    <name type="synonym">NKG5</name>
    <name type="synonym">TLA519</name>
</gene>